<name>NHAA_ERWT9</name>
<feature type="chain" id="PRO_1000188434" description="Na(+)/H(+) antiporter NhaA">
    <location>
        <begin position="1"/>
        <end position="386"/>
    </location>
</feature>
<feature type="transmembrane region" description="Helical" evidence="1">
    <location>
        <begin position="11"/>
        <end position="31"/>
    </location>
</feature>
<feature type="transmembrane region" description="Helical" evidence="1">
    <location>
        <begin position="60"/>
        <end position="80"/>
    </location>
</feature>
<feature type="transmembrane region" description="Helical" evidence="1">
    <location>
        <begin position="96"/>
        <end position="116"/>
    </location>
</feature>
<feature type="transmembrane region" description="Helical" evidence="1">
    <location>
        <begin position="126"/>
        <end position="146"/>
    </location>
</feature>
<feature type="transmembrane region" description="Helical" evidence="1">
    <location>
        <begin position="155"/>
        <end position="175"/>
    </location>
</feature>
<feature type="transmembrane region" description="Helical" evidence="1">
    <location>
        <begin position="180"/>
        <end position="200"/>
    </location>
</feature>
<feature type="transmembrane region" description="Helical" evidence="1">
    <location>
        <begin position="218"/>
        <end position="238"/>
    </location>
</feature>
<feature type="transmembrane region" description="Helical" evidence="1">
    <location>
        <begin position="260"/>
        <end position="280"/>
    </location>
</feature>
<feature type="transmembrane region" description="Helical" evidence="1">
    <location>
        <begin position="293"/>
        <end position="313"/>
    </location>
</feature>
<feature type="transmembrane region" description="Helical" evidence="1">
    <location>
        <begin position="326"/>
        <end position="346"/>
    </location>
</feature>
<feature type="transmembrane region" description="Helical" evidence="1">
    <location>
        <begin position="358"/>
        <end position="378"/>
    </location>
</feature>
<sequence length="386" mass="40789">MNLFLKKLLKNDATGGVVLIVAAAFAMFLANNDSTRHAYQAMLTLPVQFRFGALDINKDLLLWINDALMALFFLMIGLEVKRELMMGSLKGRERAMFPLIAALGGMLAPGLIYAAFNHQDAQAIHGWAIPTATDIAFALGILALLGSRVPAALKMFLMALAVIDDLGAIVIIALFYTSELSLISLTVAAASIAVLAVLNGCGVRKTSVYLAVGMVLWVAVLKSGVHATLAGVIVGLFIPLKKQEGHSPAIELAHGLHPWVSWLILPLFAFANAGISLSGVSLNGLFSAVPLGITLGLFIGKPLGITLICWLAVKLKIAALPENTRLIDIAAVGVLCGIGFTMSIFIASLAFDGAHEELVTLAKLGILSGSVISALVGYTLLRVKLR</sequence>
<accession>B2VH05</accession>
<proteinExistence type="inferred from homology"/>
<protein>
    <recommendedName>
        <fullName evidence="1">Na(+)/H(+) antiporter NhaA</fullName>
    </recommendedName>
    <alternativeName>
        <fullName evidence="1">Sodium/proton antiporter NhaA</fullName>
    </alternativeName>
</protein>
<reference key="1">
    <citation type="journal article" date="2008" name="Environ. Microbiol.">
        <title>The genome of Erwinia tasmaniensis strain Et1/99, a non-pathogenic bacterium in the genus Erwinia.</title>
        <authorList>
            <person name="Kube M."/>
            <person name="Migdoll A.M."/>
            <person name="Mueller I."/>
            <person name="Kuhl H."/>
            <person name="Beck A."/>
            <person name="Reinhardt R."/>
            <person name="Geider K."/>
        </authorList>
    </citation>
    <scope>NUCLEOTIDE SEQUENCE [LARGE SCALE GENOMIC DNA]</scope>
    <source>
        <strain>DSM 17950 / CFBP 7177 / CIP 109463 / NCPPB 4357 / Et1/99</strain>
    </source>
</reference>
<gene>
    <name evidence="1" type="primary">nhaA</name>
    <name type="ordered locus">ETA_07080</name>
</gene>
<organism>
    <name type="scientific">Erwinia tasmaniensis (strain DSM 17950 / CFBP 7177 / CIP 109463 / NCPPB 4357 / Et1/99)</name>
    <dbReference type="NCBI Taxonomy" id="465817"/>
    <lineage>
        <taxon>Bacteria</taxon>
        <taxon>Pseudomonadati</taxon>
        <taxon>Pseudomonadota</taxon>
        <taxon>Gammaproteobacteria</taxon>
        <taxon>Enterobacterales</taxon>
        <taxon>Erwiniaceae</taxon>
        <taxon>Erwinia</taxon>
    </lineage>
</organism>
<keyword id="KW-0050">Antiport</keyword>
<keyword id="KW-0997">Cell inner membrane</keyword>
<keyword id="KW-1003">Cell membrane</keyword>
<keyword id="KW-0406">Ion transport</keyword>
<keyword id="KW-0472">Membrane</keyword>
<keyword id="KW-1185">Reference proteome</keyword>
<keyword id="KW-0915">Sodium</keyword>
<keyword id="KW-0739">Sodium transport</keyword>
<keyword id="KW-0812">Transmembrane</keyword>
<keyword id="KW-1133">Transmembrane helix</keyword>
<keyword id="KW-0813">Transport</keyword>
<comment type="function">
    <text evidence="1">Na(+)/H(+) antiporter that extrudes sodium in exchange for external protons.</text>
</comment>
<comment type="catalytic activity">
    <reaction evidence="1">
        <text>Na(+)(in) + 2 H(+)(out) = Na(+)(out) + 2 H(+)(in)</text>
        <dbReference type="Rhea" id="RHEA:29251"/>
        <dbReference type="ChEBI" id="CHEBI:15378"/>
        <dbReference type="ChEBI" id="CHEBI:29101"/>
    </reaction>
    <physiologicalReaction direction="left-to-right" evidence="1">
        <dbReference type="Rhea" id="RHEA:29252"/>
    </physiologicalReaction>
</comment>
<comment type="subcellular location">
    <subcellularLocation>
        <location evidence="1">Cell inner membrane</location>
        <topology evidence="1">Multi-pass membrane protein</topology>
    </subcellularLocation>
</comment>
<comment type="similarity">
    <text evidence="1">Belongs to the NhaA Na(+)/H(+) (TC 2.A.33) antiporter family.</text>
</comment>
<evidence type="ECO:0000255" key="1">
    <source>
        <dbReference type="HAMAP-Rule" id="MF_01844"/>
    </source>
</evidence>
<dbReference type="EMBL" id="CU468135">
    <property type="protein sequence ID" value="CAO95754.1"/>
    <property type="molecule type" value="Genomic_DNA"/>
</dbReference>
<dbReference type="RefSeq" id="WP_012440456.1">
    <property type="nucleotide sequence ID" value="NC_010694.1"/>
</dbReference>
<dbReference type="SMR" id="B2VH05"/>
<dbReference type="STRING" id="465817.ETA_07080"/>
<dbReference type="KEGG" id="eta:ETA_07080"/>
<dbReference type="eggNOG" id="COG3004">
    <property type="taxonomic scope" value="Bacteria"/>
</dbReference>
<dbReference type="HOGENOM" id="CLU_015803_1_0_6"/>
<dbReference type="OrthoDB" id="9808135at2"/>
<dbReference type="Proteomes" id="UP000001726">
    <property type="component" value="Chromosome"/>
</dbReference>
<dbReference type="GO" id="GO:0005886">
    <property type="term" value="C:plasma membrane"/>
    <property type="evidence" value="ECO:0007669"/>
    <property type="project" value="UniProtKB-SubCell"/>
</dbReference>
<dbReference type="GO" id="GO:0015385">
    <property type="term" value="F:sodium:proton antiporter activity"/>
    <property type="evidence" value="ECO:0007669"/>
    <property type="project" value="TreeGrafter"/>
</dbReference>
<dbReference type="GO" id="GO:0006885">
    <property type="term" value="P:regulation of pH"/>
    <property type="evidence" value="ECO:0007669"/>
    <property type="project" value="InterPro"/>
</dbReference>
<dbReference type="Gene3D" id="1.20.1530.10">
    <property type="entry name" value="Na+/H+ antiporter like domain"/>
    <property type="match status" value="1"/>
</dbReference>
<dbReference type="HAMAP" id="MF_01844">
    <property type="entry name" value="NhaA"/>
    <property type="match status" value="1"/>
</dbReference>
<dbReference type="InterPro" id="IPR023171">
    <property type="entry name" value="Na/H_antiporter_dom_sf"/>
</dbReference>
<dbReference type="InterPro" id="IPR004670">
    <property type="entry name" value="NhaA"/>
</dbReference>
<dbReference type="NCBIfam" id="TIGR00773">
    <property type="entry name" value="NhaA"/>
    <property type="match status" value="1"/>
</dbReference>
<dbReference type="NCBIfam" id="NF007111">
    <property type="entry name" value="PRK09560.1"/>
    <property type="match status" value="1"/>
</dbReference>
<dbReference type="NCBIfam" id="NF007112">
    <property type="entry name" value="PRK09561.1"/>
    <property type="match status" value="1"/>
</dbReference>
<dbReference type="PANTHER" id="PTHR30341:SF0">
    <property type="entry name" value="NA(+)_H(+) ANTIPORTER NHAA"/>
    <property type="match status" value="1"/>
</dbReference>
<dbReference type="PANTHER" id="PTHR30341">
    <property type="entry name" value="SODIUM ION/PROTON ANTIPORTER NHAA-RELATED"/>
    <property type="match status" value="1"/>
</dbReference>
<dbReference type="Pfam" id="PF06965">
    <property type="entry name" value="Na_H_antiport_1"/>
    <property type="match status" value="1"/>
</dbReference>